<keyword id="KW-0119">Carbohydrate metabolism</keyword>
<keyword id="KW-1015">Disulfide bond</keyword>
<keyword id="KW-0256">Endoplasmic reticulum</keyword>
<keyword id="KW-0294">Fucose metabolism</keyword>
<keyword id="KW-0325">Glycoprotein</keyword>
<keyword id="KW-0328">Glycosyltransferase</keyword>
<keyword id="KW-0333">Golgi apparatus</keyword>
<keyword id="KW-1185">Reference proteome</keyword>
<keyword id="KW-0732">Signal</keyword>
<keyword id="KW-0808">Transferase</keyword>
<comment type="function">
    <text evidence="1 2">Catalyzes the reaction that attaches fucose through an O-glycosidic linkage to a conserved serine or threonine residue in the consensus sequence C1-X-X-S/T-C2 of thrombospondin type I repeats (TSRs) where C1 and C2 are the first and second cysteines of the repeat, respectively. O-fucosylates members of several protein families including the ADAMTS, the thrombospondin (TSP) and spondin families. Required for the proper secretion of ADAMTS family members such as ADAMTSL1 and ADAMTS13 (By similarity). The O-fucosylation of TSRs is also required for restricting epithelial to mesenchymal transition (EMT), maintaining the correct patterning of mesoderm and localization of the definite endoderm (By similarity).</text>
</comment>
<comment type="catalytic activity">
    <reaction evidence="2">
        <text>L-seryl-[protein] + GDP-beta-L-fucose = 3-O-(alpha-L-fucosyl)-L-seryl-[protein] + GDP + H(+)</text>
        <dbReference type="Rhea" id="RHEA:63644"/>
        <dbReference type="Rhea" id="RHEA-COMP:9863"/>
        <dbReference type="Rhea" id="RHEA-COMP:17914"/>
        <dbReference type="ChEBI" id="CHEBI:15378"/>
        <dbReference type="ChEBI" id="CHEBI:29999"/>
        <dbReference type="ChEBI" id="CHEBI:57273"/>
        <dbReference type="ChEBI" id="CHEBI:58189"/>
        <dbReference type="ChEBI" id="CHEBI:189632"/>
        <dbReference type="EC" id="2.4.1.221"/>
    </reaction>
    <physiologicalReaction direction="left-to-right" evidence="2">
        <dbReference type="Rhea" id="RHEA:63645"/>
    </physiologicalReaction>
</comment>
<comment type="catalytic activity">
    <reaction evidence="2">
        <text>L-threonyl-[protein] + GDP-beta-L-fucose = 3-O-(alpha-L-fucosyl)-L-threonyl-[protein] + GDP + H(+)</text>
        <dbReference type="Rhea" id="RHEA:70491"/>
        <dbReference type="Rhea" id="RHEA-COMP:11060"/>
        <dbReference type="Rhea" id="RHEA-COMP:17915"/>
        <dbReference type="ChEBI" id="CHEBI:15378"/>
        <dbReference type="ChEBI" id="CHEBI:30013"/>
        <dbReference type="ChEBI" id="CHEBI:57273"/>
        <dbReference type="ChEBI" id="CHEBI:58189"/>
        <dbReference type="ChEBI" id="CHEBI:189631"/>
        <dbReference type="EC" id="2.4.1.221"/>
    </reaction>
    <physiologicalReaction direction="left-to-right" evidence="2">
        <dbReference type="Rhea" id="RHEA:70492"/>
    </physiologicalReaction>
</comment>
<comment type="pathway">
    <text evidence="2">Protein modification; protein glycosylation.</text>
</comment>
<comment type="subcellular location">
    <subcellularLocation>
        <location evidence="2">Endoplasmic reticulum</location>
    </subcellularLocation>
    <subcellularLocation>
        <location evidence="2">Golgi apparatus</location>
    </subcellularLocation>
    <text evidence="2">Mainly located in the endoplasmic reticulum.</text>
</comment>
<comment type="similarity">
    <text evidence="4">Belongs to the glycosyltransferase 68 family.</text>
</comment>
<feature type="signal peptide" evidence="3">
    <location>
        <begin position="1"/>
        <end position="21"/>
    </location>
</feature>
<feature type="chain" id="PRO_0000012156" description="GDP-fucose protein O-fucosyltransferase 2">
    <location>
        <begin position="22"/>
        <end position="429"/>
    </location>
</feature>
<feature type="active site" description="Proton acceptor" evidence="2">
    <location>
        <position position="54"/>
    </location>
</feature>
<feature type="binding site" evidence="2">
    <location>
        <begin position="53"/>
        <end position="57"/>
    </location>
    <ligand>
        <name>GDP-beta-L-fucose</name>
        <dbReference type="ChEBI" id="CHEBI:57273"/>
    </ligand>
</feature>
<feature type="binding site" evidence="2">
    <location>
        <begin position="292"/>
        <end position="294"/>
    </location>
    <ligand>
        <name>GDP-beta-L-fucose</name>
        <dbReference type="ChEBI" id="CHEBI:57273"/>
    </ligand>
</feature>
<feature type="binding site" evidence="2">
    <location>
        <position position="371"/>
    </location>
    <ligand>
        <name>GDP-beta-L-fucose</name>
        <dbReference type="ChEBI" id="CHEBI:57273"/>
    </ligand>
</feature>
<feature type="binding site" evidence="2">
    <location>
        <begin position="388"/>
        <end position="389"/>
    </location>
    <ligand>
        <name>GDP-beta-L-fucose</name>
        <dbReference type="ChEBI" id="CHEBI:57273"/>
    </ligand>
</feature>
<feature type="site" description="Essential for catalytic activity" evidence="2">
    <location>
        <position position="396"/>
    </location>
</feature>
<feature type="glycosylation site" description="N-linked (GlcNAc...) asparagine" evidence="3">
    <location>
        <position position="189"/>
    </location>
</feature>
<feature type="glycosylation site" description="N-linked (GlcNAc...) asparagine" evidence="3">
    <location>
        <position position="209"/>
    </location>
</feature>
<feature type="glycosylation site" description="N-linked (GlcNAc...) asparagine" evidence="3">
    <location>
        <position position="259"/>
    </location>
</feature>
<feature type="disulfide bond" evidence="2">
    <location>
        <begin position="161"/>
        <end position="192"/>
    </location>
</feature>
<feature type="disulfide bond" evidence="2">
    <location>
        <begin position="412"/>
        <end position="419"/>
    </location>
</feature>
<evidence type="ECO:0000250" key="1">
    <source>
        <dbReference type="UniProtKB" id="Q8VHI3"/>
    </source>
</evidence>
<evidence type="ECO:0000250" key="2">
    <source>
        <dbReference type="UniProtKB" id="Q9Y2G5"/>
    </source>
</evidence>
<evidence type="ECO:0000255" key="3"/>
<evidence type="ECO:0000305" key="4"/>
<reference key="1">
    <citation type="journal article" date="2003" name="Glycobiology">
        <title>A new superfamily of protein-O-fucosyltransferases, alpha2-fucosyltransferases, and alpha6-fucosyltransferases: phylogeny and identification of conserved peptide motifs.</title>
        <authorList>
            <person name="Martinez-Duncker I."/>
            <person name="Mollicone R."/>
            <person name="Candelier J.-J."/>
            <person name="Breton C."/>
            <person name="Oriol R."/>
        </authorList>
    </citation>
    <scope>NUCLEOTIDE SEQUENCE [MRNA]</scope>
</reference>
<proteinExistence type="evidence at transcript level"/>
<organism>
    <name type="scientific">Pan troglodytes</name>
    <name type="common">Chimpanzee</name>
    <dbReference type="NCBI Taxonomy" id="9598"/>
    <lineage>
        <taxon>Eukaryota</taxon>
        <taxon>Metazoa</taxon>
        <taxon>Chordata</taxon>
        <taxon>Craniata</taxon>
        <taxon>Vertebrata</taxon>
        <taxon>Euteleostomi</taxon>
        <taxon>Mammalia</taxon>
        <taxon>Eutheria</taxon>
        <taxon>Euarchontoglires</taxon>
        <taxon>Primates</taxon>
        <taxon>Haplorrhini</taxon>
        <taxon>Catarrhini</taxon>
        <taxon>Hominidae</taxon>
        <taxon>Pan</taxon>
    </lineage>
</organism>
<protein>
    <recommendedName>
        <fullName>GDP-fucose protein O-fucosyltransferase 2</fullName>
        <ecNumber evidence="2">2.4.1.221</ecNumber>
    </recommendedName>
    <alternativeName>
        <fullName>Peptide-O-fucosyltransferase 2</fullName>
        <shortName>O-FucT-2</shortName>
    </alternativeName>
</protein>
<accession>Q6EV56</accession>
<gene>
    <name type="primary">POFUT2</name>
    <name type="synonym">FUT13</name>
</gene>
<name>OFUT2_PANTR</name>
<sequence length="429" mass="49847">MATLSFVFLLLGAVSWPPASASGQEFWPGQSAADILSGAASRRRYLLYDVNPPEGFNLRRDVYIRIASLLKTLLKTEEWVLVLPPWGRLYHWQSPDIHQVRIPWSEFFDLPSLNKNIPVIEYEQFIAESGGPFIDQVYVLQSYAEGWKEGTWEEKVDERPCIDQLLYSQDKHEYYRGWFWGYEETRGLNVSCLSVQGSASIVAPLLLRNTSARSVMLDRAENLLHDHYGGKEYWDTRRSMVFARHLREVGDEFRSRHLNSTDDADGIPFQEDWTKMKVKLGSALGGPYLGVHLRRKDFIWGHRQDVPSLEGAVRKIRSLMKTHRLDKVFVATDAVRKEYEELKKLLPEMVRFEPTWEELELYKDGGVAIIDQWICAHARFFIGTSVSTFSFRIHEEREILGLDPKTTYNRFCGDQEKACEQPTHWKITY</sequence>
<dbReference type="EC" id="2.4.1.221" evidence="2"/>
<dbReference type="EMBL" id="AJ781756">
    <property type="protein sequence ID" value="CAH03731.1"/>
    <property type="molecule type" value="mRNA"/>
</dbReference>
<dbReference type="RefSeq" id="NP_001008983.1">
    <property type="nucleotide sequence ID" value="NM_001008983.1"/>
</dbReference>
<dbReference type="SMR" id="Q6EV56"/>
<dbReference type="FunCoup" id="Q6EV56">
    <property type="interactions" value="1184"/>
</dbReference>
<dbReference type="STRING" id="9598.ENSPTRP00000024102"/>
<dbReference type="CAZy" id="GT68">
    <property type="family name" value="Glycosyltransferase Family 68"/>
</dbReference>
<dbReference type="GlyCosmos" id="Q6EV56">
    <property type="glycosylation" value="3 sites, No reported glycans"/>
</dbReference>
<dbReference type="PaxDb" id="9598-ENSPTRP00000024102"/>
<dbReference type="GeneID" id="449505"/>
<dbReference type="KEGG" id="ptr:449505"/>
<dbReference type="CTD" id="23275"/>
<dbReference type="eggNOG" id="ENOG502QPS6">
    <property type="taxonomic scope" value="Eukaryota"/>
</dbReference>
<dbReference type="HOGENOM" id="CLU_033856_0_0_1"/>
<dbReference type="InParanoid" id="Q6EV56"/>
<dbReference type="TreeFam" id="TF314337"/>
<dbReference type="UniPathway" id="UPA00378"/>
<dbReference type="Proteomes" id="UP000002277">
    <property type="component" value="Unplaced"/>
</dbReference>
<dbReference type="GO" id="GO:0005783">
    <property type="term" value="C:endoplasmic reticulum"/>
    <property type="evidence" value="ECO:0007669"/>
    <property type="project" value="UniProtKB-SubCell"/>
</dbReference>
<dbReference type="GO" id="GO:0005794">
    <property type="term" value="C:Golgi apparatus"/>
    <property type="evidence" value="ECO:0007669"/>
    <property type="project" value="UniProtKB-SubCell"/>
</dbReference>
<dbReference type="GO" id="GO:0046922">
    <property type="term" value="F:peptide-O-fucosyltransferase activity"/>
    <property type="evidence" value="ECO:0000250"/>
    <property type="project" value="UniProtKB"/>
</dbReference>
<dbReference type="GO" id="GO:0006004">
    <property type="term" value="P:fucose metabolic process"/>
    <property type="evidence" value="ECO:0007669"/>
    <property type="project" value="UniProtKB-KW"/>
</dbReference>
<dbReference type="GO" id="GO:0036066">
    <property type="term" value="P:protein O-linked fucosylation"/>
    <property type="evidence" value="ECO:0000250"/>
    <property type="project" value="UniProtKB"/>
</dbReference>
<dbReference type="CDD" id="cd11298">
    <property type="entry name" value="O-FucT-2"/>
    <property type="match status" value="1"/>
</dbReference>
<dbReference type="FunFam" id="3.40.50.11340:FF:000002">
    <property type="entry name" value="GDP-fucose protein O-fucosyltransferase 2"/>
    <property type="match status" value="1"/>
</dbReference>
<dbReference type="FunFam" id="3.40.50.11350:FF:000002">
    <property type="entry name" value="GDP-fucose protein O-fucosyltransferase 2"/>
    <property type="match status" value="1"/>
</dbReference>
<dbReference type="Gene3D" id="3.40.50.11340">
    <property type="match status" value="1"/>
</dbReference>
<dbReference type="Gene3D" id="3.40.50.11350">
    <property type="match status" value="1"/>
</dbReference>
<dbReference type="InterPro" id="IPR019378">
    <property type="entry name" value="GDP-Fuc_O-FucTrfase"/>
</dbReference>
<dbReference type="InterPro" id="IPR045130">
    <property type="entry name" value="OFUT2-like"/>
</dbReference>
<dbReference type="PANTHER" id="PTHR13398">
    <property type="entry name" value="GDP-FUCOSE PROTEIN O-FUCOSYLTRANSFERASE 2"/>
    <property type="match status" value="1"/>
</dbReference>
<dbReference type="PANTHER" id="PTHR13398:SF0">
    <property type="entry name" value="GDP-FUCOSE PROTEIN O-FUCOSYLTRANSFERASE 2"/>
    <property type="match status" value="1"/>
</dbReference>
<dbReference type="Pfam" id="PF10250">
    <property type="entry name" value="O-FucT"/>
    <property type="match status" value="1"/>
</dbReference>